<name>FXL14_MOUSE</name>
<accession>Q8BID8</accession>
<accession>Q3U2Q9</accession>
<accession>Q8R5H7</accession>
<accession>Q8VDT7</accession>
<accession>Q922N5</accession>
<reference key="1">
    <citation type="journal article" date="2005" name="Science">
        <title>The transcriptional landscape of the mammalian genome.</title>
        <authorList>
            <person name="Carninci P."/>
            <person name="Kasukawa T."/>
            <person name="Katayama S."/>
            <person name="Gough J."/>
            <person name="Frith M.C."/>
            <person name="Maeda N."/>
            <person name="Oyama R."/>
            <person name="Ravasi T."/>
            <person name="Lenhard B."/>
            <person name="Wells C."/>
            <person name="Kodzius R."/>
            <person name="Shimokawa K."/>
            <person name="Bajic V.B."/>
            <person name="Brenner S.E."/>
            <person name="Batalov S."/>
            <person name="Forrest A.R."/>
            <person name="Zavolan M."/>
            <person name="Davis M.J."/>
            <person name="Wilming L.G."/>
            <person name="Aidinis V."/>
            <person name="Allen J.E."/>
            <person name="Ambesi-Impiombato A."/>
            <person name="Apweiler R."/>
            <person name="Aturaliya R.N."/>
            <person name="Bailey T.L."/>
            <person name="Bansal M."/>
            <person name="Baxter L."/>
            <person name="Beisel K.W."/>
            <person name="Bersano T."/>
            <person name="Bono H."/>
            <person name="Chalk A.M."/>
            <person name="Chiu K.P."/>
            <person name="Choudhary V."/>
            <person name="Christoffels A."/>
            <person name="Clutterbuck D.R."/>
            <person name="Crowe M.L."/>
            <person name="Dalla E."/>
            <person name="Dalrymple B.P."/>
            <person name="de Bono B."/>
            <person name="Della Gatta G."/>
            <person name="di Bernardo D."/>
            <person name="Down T."/>
            <person name="Engstrom P."/>
            <person name="Fagiolini M."/>
            <person name="Faulkner G."/>
            <person name="Fletcher C.F."/>
            <person name="Fukushima T."/>
            <person name="Furuno M."/>
            <person name="Futaki S."/>
            <person name="Gariboldi M."/>
            <person name="Georgii-Hemming P."/>
            <person name="Gingeras T.R."/>
            <person name="Gojobori T."/>
            <person name="Green R.E."/>
            <person name="Gustincich S."/>
            <person name="Harbers M."/>
            <person name="Hayashi Y."/>
            <person name="Hensch T.K."/>
            <person name="Hirokawa N."/>
            <person name="Hill D."/>
            <person name="Huminiecki L."/>
            <person name="Iacono M."/>
            <person name="Ikeo K."/>
            <person name="Iwama A."/>
            <person name="Ishikawa T."/>
            <person name="Jakt M."/>
            <person name="Kanapin A."/>
            <person name="Katoh M."/>
            <person name="Kawasawa Y."/>
            <person name="Kelso J."/>
            <person name="Kitamura H."/>
            <person name="Kitano H."/>
            <person name="Kollias G."/>
            <person name="Krishnan S.P."/>
            <person name="Kruger A."/>
            <person name="Kummerfeld S.K."/>
            <person name="Kurochkin I.V."/>
            <person name="Lareau L.F."/>
            <person name="Lazarevic D."/>
            <person name="Lipovich L."/>
            <person name="Liu J."/>
            <person name="Liuni S."/>
            <person name="McWilliam S."/>
            <person name="Madan Babu M."/>
            <person name="Madera M."/>
            <person name="Marchionni L."/>
            <person name="Matsuda H."/>
            <person name="Matsuzawa S."/>
            <person name="Miki H."/>
            <person name="Mignone F."/>
            <person name="Miyake S."/>
            <person name="Morris K."/>
            <person name="Mottagui-Tabar S."/>
            <person name="Mulder N."/>
            <person name="Nakano N."/>
            <person name="Nakauchi H."/>
            <person name="Ng P."/>
            <person name="Nilsson R."/>
            <person name="Nishiguchi S."/>
            <person name="Nishikawa S."/>
            <person name="Nori F."/>
            <person name="Ohara O."/>
            <person name="Okazaki Y."/>
            <person name="Orlando V."/>
            <person name="Pang K.C."/>
            <person name="Pavan W.J."/>
            <person name="Pavesi G."/>
            <person name="Pesole G."/>
            <person name="Petrovsky N."/>
            <person name="Piazza S."/>
            <person name="Reed J."/>
            <person name="Reid J.F."/>
            <person name="Ring B.Z."/>
            <person name="Ringwald M."/>
            <person name="Rost B."/>
            <person name="Ruan Y."/>
            <person name="Salzberg S.L."/>
            <person name="Sandelin A."/>
            <person name="Schneider C."/>
            <person name="Schoenbach C."/>
            <person name="Sekiguchi K."/>
            <person name="Semple C.A."/>
            <person name="Seno S."/>
            <person name="Sessa L."/>
            <person name="Sheng Y."/>
            <person name="Shibata Y."/>
            <person name="Shimada H."/>
            <person name="Shimada K."/>
            <person name="Silva D."/>
            <person name="Sinclair B."/>
            <person name="Sperling S."/>
            <person name="Stupka E."/>
            <person name="Sugiura K."/>
            <person name="Sultana R."/>
            <person name="Takenaka Y."/>
            <person name="Taki K."/>
            <person name="Tammoja K."/>
            <person name="Tan S.L."/>
            <person name="Tang S."/>
            <person name="Taylor M.S."/>
            <person name="Tegner J."/>
            <person name="Teichmann S.A."/>
            <person name="Ueda H.R."/>
            <person name="van Nimwegen E."/>
            <person name="Verardo R."/>
            <person name="Wei C.L."/>
            <person name="Yagi K."/>
            <person name="Yamanishi H."/>
            <person name="Zabarovsky E."/>
            <person name="Zhu S."/>
            <person name="Zimmer A."/>
            <person name="Hide W."/>
            <person name="Bult C."/>
            <person name="Grimmond S.M."/>
            <person name="Teasdale R.D."/>
            <person name="Liu E.T."/>
            <person name="Brusic V."/>
            <person name="Quackenbush J."/>
            <person name="Wahlestedt C."/>
            <person name="Mattick J.S."/>
            <person name="Hume D.A."/>
            <person name="Kai C."/>
            <person name="Sasaki D."/>
            <person name="Tomaru Y."/>
            <person name="Fukuda S."/>
            <person name="Kanamori-Katayama M."/>
            <person name="Suzuki M."/>
            <person name="Aoki J."/>
            <person name="Arakawa T."/>
            <person name="Iida J."/>
            <person name="Imamura K."/>
            <person name="Itoh M."/>
            <person name="Kato T."/>
            <person name="Kawaji H."/>
            <person name="Kawagashira N."/>
            <person name="Kawashima T."/>
            <person name="Kojima M."/>
            <person name="Kondo S."/>
            <person name="Konno H."/>
            <person name="Nakano K."/>
            <person name="Ninomiya N."/>
            <person name="Nishio T."/>
            <person name="Okada M."/>
            <person name="Plessy C."/>
            <person name="Shibata K."/>
            <person name="Shiraki T."/>
            <person name="Suzuki S."/>
            <person name="Tagami M."/>
            <person name="Waki K."/>
            <person name="Watahiki A."/>
            <person name="Okamura-Oho Y."/>
            <person name="Suzuki H."/>
            <person name="Kawai J."/>
            <person name="Hayashizaki Y."/>
        </authorList>
    </citation>
    <scope>NUCLEOTIDE SEQUENCE [LARGE SCALE MRNA]</scope>
    <source>
        <strain>C57BL/6J</strain>
        <strain>NOD</strain>
        <tissue>Heart</tissue>
        <tissue>Mammary tumor</tissue>
    </source>
</reference>
<reference key="2">
    <citation type="journal article" date="2004" name="Genome Res.">
        <title>The status, quality, and expansion of the NIH full-length cDNA project: the Mammalian Gene Collection (MGC).</title>
        <authorList>
            <consortium name="The MGC Project Team"/>
        </authorList>
    </citation>
    <scope>NUCLEOTIDE SEQUENCE [LARGE SCALE MRNA]</scope>
</reference>
<reference key="3">
    <citation type="journal article" date="2002" name="Dev. Genes Evol.">
        <title>A conserved F-box gene with unusual transcript localization.</title>
        <authorList>
            <person name="Das T."/>
            <person name="Purkayastha-Mukherjee C."/>
            <person name="D'Angelo J."/>
            <person name="Weir M."/>
        </authorList>
    </citation>
    <scope>NUCLEOTIDE SEQUENCE [MRNA] OF 207-390</scope>
</reference>
<protein>
    <recommendedName>
        <fullName>F-box/LRR-repeat protein 14</fullName>
    </recommendedName>
    <alternativeName>
        <fullName>F-box and leucine-rich repeat protein 14</fullName>
    </alternativeName>
</protein>
<feature type="chain" id="PRO_0000119862" description="F-box/LRR-repeat protein 14">
    <location>
        <begin position="1"/>
        <end position="400"/>
    </location>
</feature>
<feature type="domain" description="F-box">
    <location>
        <begin position="2"/>
        <end position="48"/>
    </location>
</feature>
<feature type="repeat" description="LRR 1">
    <location>
        <begin position="144"/>
        <end position="163"/>
    </location>
</feature>
<feature type="repeat" description="LRR 2">
    <location>
        <begin position="170"/>
        <end position="191"/>
    </location>
</feature>
<feature type="repeat" description="LRR 3">
    <location>
        <begin position="203"/>
        <end position="225"/>
    </location>
</feature>
<feature type="repeat" description="LRR 4">
    <location>
        <begin position="229"/>
        <end position="250"/>
    </location>
</feature>
<feature type="repeat" description="LRR 5">
    <location>
        <begin position="254"/>
        <end position="275"/>
    </location>
</feature>
<feature type="region of interest" description="Required for down-regulation of SNAI1" evidence="1">
    <location>
        <begin position="2"/>
        <end position="48"/>
    </location>
</feature>
<feature type="sequence conflict" description="In Ref. 2; AAH21329." evidence="2" ref="2">
    <original>V</original>
    <variation>F</variation>
    <location>
        <position position="22"/>
    </location>
</feature>
<dbReference type="EMBL" id="AK084506">
    <property type="protein sequence ID" value="BAC39201.1"/>
    <property type="molecule type" value="mRNA"/>
</dbReference>
<dbReference type="EMBL" id="AK155154">
    <property type="protein sequence ID" value="BAE33081.1"/>
    <property type="molecule type" value="mRNA"/>
</dbReference>
<dbReference type="EMBL" id="BC006913">
    <property type="protein sequence ID" value="AAH06913.1"/>
    <property type="molecule type" value="mRNA"/>
</dbReference>
<dbReference type="EMBL" id="BC021329">
    <property type="protein sequence ID" value="AAH21329.1"/>
    <property type="molecule type" value="mRNA"/>
</dbReference>
<dbReference type="EMBL" id="AF467463">
    <property type="protein sequence ID" value="AAL75967.1"/>
    <property type="molecule type" value="mRNA"/>
</dbReference>
<dbReference type="CCDS" id="CCDS20475.1"/>
<dbReference type="RefSeq" id="NP_598701.2">
    <property type="nucleotide sequence ID" value="NM_133940.3"/>
</dbReference>
<dbReference type="SMR" id="Q8BID8"/>
<dbReference type="FunCoup" id="Q8BID8">
    <property type="interactions" value="726"/>
</dbReference>
<dbReference type="STRING" id="10090.ENSMUSP00000032094"/>
<dbReference type="GlyGen" id="Q8BID8">
    <property type="glycosylation" value="2 sites, 2 N-linked glycans (2 sites)"/>
</dbReference>
<dbReference type="iPTMnet" id="Q8BID8"/>
<dbReference type="PhosphoSitePlus" id="Q8BID8"/>
<dbReference type="PaxDb" id="10090-ENSMUSP00000032094"/>
<dbReference type="ProteomicsDB" id="267535"/>
<dbReference type="Antibodypedia" id="41744">
    <property type="antibodies" value="107 antibodies from 23 providers"/>
</dbReference>
<dbReference type="DNASU" id="101358"/>
<dbReference type="Ensembl" id="ENSMUST00000032094.7">
    <property type="protein sequence ID" value="ENSMUSP00000032094.6"/>
    <property type="gene ID" value="ENSMUSG00000030019.7"/>
</dbReference>
<dbReference type="GeneID" id="101358"/>
<dbReference type="KEGG" id="mmu:101358"/>
<dbReference type="UCSC" id="uc009dmj.2">
    <property type="organism name" value="mouse"/>
</dbReference>
<dbReference type="AGR" id="MGI:2141676"/>
<dbReference type="CTD" id="144699"/>
<dbReference type="MGI" id="MGI:2141676">
    <property type="gene designation" value="Fbxl14"/>
</dbReference>
<dbReference type="VEuPathDB" id="HostDB:ENSMUSG00000030019"/>
<dbReference type="eggNOG" id="KOG1947">
    <property type="taxonomic scope" value="Eukaryota"/>
</dbReference>
<dbReference type="GeneTree" id="ENSGT00940000159857"/>
<dbReference type="HOGENOM" id="CLU_016072_7_0_1"/>
<dbReference type="InParanoid" id="Q8BID8"/>
<dbReference type="OMA" id="DQALVHI"/>
<dbReference type="OrthoDB" id="2585512at2759"/>
<dbReference type="PhylomeDB" id="Q8BID8"/>
<dbReference type="TreeFam" id="TF313434"/>
<dbReference type="Reactome" id="R-MMU-8951664">
    <property type="pathway name" value="Neddylation"/>
</dbReference>
<dbReference type="Reactome" id="R-MMU-983168">
    <property type="pathway name" value="Antigen processing: Ubiquitination &amp; Proteasome degradation"/>
</dbReference>
<dbReference type="BioGRID-ORCS" id="101358">
    <property type="hits" value="1 hit in 78 CRISPR screens"/>
</dbReference>
<dbReference type="ChiTaRS" id="Fbxl14">
    <property type="organism name" value="mouse"/>
</dbReference>
<dbReference type="PRO" id="PR:Q8BID8"/>
<dbReference type="Proteomes" id="UP000000589">
    <property type="component" value="Chromosome 6"/>
</dbReference>
<dbReference type="RNAct" id="Q8BID8">
    <property type="molecule type" value="protein"/>
</dbReference>
<dbReference type="Bgee" id="ENSMUSG00000030019">
    <property type="expression patterns" value="Expressed in granulocyte and 250 other cell types or tissues"/>
</dbReference>
<dbReference type="GO" id="GO:0005737">
    <property type="term" value="C:cytoplasm"/>
    <property type="evidence" value="ECO:0000250"/>
    <property type="project" value="UniProtKB"/>
</dbReference>
<dbReference type="GO" id="GO:0004842">
    <property type="term" value="F:ubiquitin-protein transferase activity"/>
    <property type="evidence" value="ECO:0000250"/>
    <property type="project" value="UniProtKB"/>
</dbReference>
<dbReference type="GO" id="GO:0006511">
    <property type="term" value="P:ubiquitin-dependent protein catabolic process"/>
    <property type="evidence" value="ECO:0000250"/>
    <property type="project" value="UniProtKB"/>
</dbReference>
<dbReference type="CDD" id="cd22125">
    <property type="entry name" value="F-box_FBXL14"/>
    <property type="match status" value="1"/>
</dbReference>
<dbReference type="FunFam" id="3.80.10.10:FF:000051">
    <property type="entry name" value="F-box and leucine-rich repeat protein 14"/>
    <property type="match status" value="1"/>
</dbReference>
<dbReference type="FunFam" id="3.80.10.10:FF:000075">
    <property type="entry name" value="F-box/LRR-repeat protein 14 isoform X1"/>
    <property type="match status" value="1"/>
</dbReference>
<dbReference type="FunFam" id="1.20.1280.50:FF:000059">
    <property type="entry name" value="Partner of Paired"/>
    <property type="match status" value="1"/>
</dbReference>
<dbReference type="Gene3D" id="3.80.10.10">
    <property type="entry name" value="Ribonuclease Inhibitor"/>
    <property type="match status" value="2"/>
</dbReference>
<dbReference type="InterPro" id="IPR036047">
    <property type="entry name" value="F-box-like_dom_sf"/>
</dbReference>
<dbReference type="InterPro" id="IPR001810">
    <property type="entry name" value="F-box_dom"/>
</dbReference>
<dbReference type="InterPro" id="IPR047932">
    <property type="entry name" value="FBXL14_F-box"/>
</dbReference>
<dbReference type="InterPro" id="IPR001611">
    <property type="entry name" value="Leu-rich_rpt"/>
</dbReference>
<dbReference type="InterPro" id="IPR006553">
    <property type="entry name" value="Leu-rich_rpt_Cys-con_subtyp"/>
</dbReference>
<dbReference type="InterPro" id="IPR032675">
    <property type="entry name" value="LRR_dom_sf"/>
</dbReference>
<dbReference type="PANTHER" id="PTHR13318">
    <property type="entry name" value="PARTNER OF PAIRED, ISOFORM B-RELATED"/>
    <property type="match status" value="1"/>
</dbReference>
<dbReference type="Pfam" id="PF12937">
    <property type="entry name" value="F-box-like"/>
    <property type="match status" value="1"/>
</dbReference>
<dbReference type="Pfam" id="PF13516">
    <property type="entry name" value="LRR_6"/>
    <property type="match status" value="4"/>
</dbReference>
<dbReference type="SMART" id="SM00367">
    <property type="entry name" value="LRR_CC"/>
    <property type="match status" value="11"/>
</dbReference>
<dbReference type="SUPFAM" id="SSF81383">
    <property type="entry name" value="F-box domain"/>
    <property type="match status" value="1"/>
</dbReference>
<dbReference type="SUPFAM" id="SSF52047">
    <property type="entry name" value="RNI-like"/>
    <property type="match status" value="1"/>
</dbReference>
<evidence type="ECO:0000250" key="1"/>
<evidence type="ECO:0000305" key="2"/>
<keyword id="KW-0963">Cytoplasm</keyword>
<keyword id="KW-0433">Leucine-rich repeat</keyword>
<keyword id="KW-1185">Reference proteome</keyword>
<keyword id="KW-0677">Repeat</keyword>
<keyword id="KW-0833">Ubl conjugation pathway</keyword>
<organism>
    <name type="scientific">Mus musculus</name>
    <name type="common">Mouse</name>
    <dbReference type="NCBI Taxonomy" id="10090"/>
    <lineage>
        <taxon>Eukaryota</taxon>
        <taxon>Metazoa</taxon>
        <taxon>Chordata</taxon>
        <taxon>Craniata</taxon>
        <taxon>Vertebrata</taxon>
        <taxon>Euteleostomi</taxon>
        <taxon>Mammalia</taxon>
        <taxon>Eutheria</taxon>
        <taxon>Euarchontoglires</taxon>
        <taxon>Glires</taxon>
        <taxon>Rodentia</taxon>
        <taxon>Myomorpha</taxon>
        <taxon>Muroidea</taxon>
        <taxon>Muridae</taxon>
        <taxon>Murinae</taxon>
        <taxon>Mus</taxon>
        <taxon>Mus</taxon>
    </lineage>
</organism>
<gene>
    <name type="primary">Fbxl14</name>
    <name type="synonym">Fbl14</name>
    <name type="synonym">Ppa</name>
</gene>
<sequence>METHISCLFPELLAMIFGYLDVRDKGRAAQVCTAWRDAAYHKSVWRGVEAKLHLRRANPSLFPSLQARGIRRVQILSLRRSLSYVIQGMANIESLNLSGCYNLTDNGLGHAFVQEIGSLRALNLSLCKQITDSSLGRIAQYLKGLEVLELGGCSNITNTGLLLIAWGLQRLKSLNLRSCRHLSDVGIGHLAGMTRSAAEGCLGLEQLTLQDCQKLTDLSLKHISRGLTGLRLLNLSFCGGISDAGLLHLSHMGSLRSLNLRSCDNISDTGIMHLAMGSLRLSGLDVSFCDKVGDQSLAYIAQGLDGLKSLSLCSCHISDDGINRMVRQMHGLRTLNIGQCVRITDKGLELIAEHLSQLTGIDLYGCTRITKRGLERITQLPCLKVLNLGLWQMTDSEKVR</sequence>
<proteinExistence type="evidence at transcript level"/>
<comment type="function">
    <text evidence="1">Substrate-recognition component of some (SKP1-CUL1-F-box protein)-type E3 ubiquitin-protein ligase complexes. The SCF(FBXL14) complex acts by mediating ubiquitination and subsequent degradation of SNAI1 (By similarity).</text>
</comment>
<comment type="subunit">
    <text evidence="1">Part of a SCF (SKP1-cullin-F-box) ubiquitin-protein ligase complex. Interacts with SKP1 and CUL1. Interacts with SNAI1; the interaction requires the phosphorylation of the two serine residues in the substrate destruction motif D-S-G-X(2,3,4)-S (By similarity).</text>
</comment>
<comment type="subcellular location">
    <subcellularLocation>
        <location evidence="1">Cytoplasm</location>
    </subcellularLocation>
</comment>